<sequence>MKRRTARERAMQALYQMDITGELEPKVAVENTLDEGEETNEFLESLVVGFVENKEVIDEAIRQNLKKWKLERISIVDRSILRVAVYEMKYMEEIPHNVTINEAIEIAKTFGDEESRRFINGVLSNIKDTL</sequence>
<keyword id="KW-0694">RNA-binding</keyword>
<keyword id="KW-0804">Transcription</keyword>
<keyword id="KW-0889">Transcription antitermination</keyword>
<keyword id="KW-0805">Transcription regulation</keyword>
<gene>
    <name evidence="1" type="primary">nusB</name>
    <name type="ordered locus">BALH_3790</name>
</gene>
<reference key="1">
    <citation type="journal article" date="2007" name="J. Bacteriol.">
        <title>The complete genome sequence of Bacillus thuringiensis Al Hakam.</title>
        <authorList>
            <person name="Challacombe J.F."/>
            <person name="Altherr M.R."/>
            <person name="Xie G."/>
            <person name="Bhotika S.S."/>
            <person name="Brown N."/>
            <person name="Bruce D."/>
            <person name="Campbell C.S."/>
            <person name="Campbell M.L."/>
            <person name="Chen J."/>
            <person name="Chertkov O."/>
            <person name="Cleland C."/>
            <person name="Dimitrijevic M."/>
            <person name="Doggett N.A."/>
            <person name="Fawcett J.J."/>
            <person name="Glavina T."/>
            <person name="Goodwin L.A."/>
            <person name="Green L.D."/>
            <person name="Han C.S."/>
            <person name="Hill K.K."/>
            <person name="Hitchcock P."/>
            <person name="Jackson P.J."/>
            <person name="Keim P."/>
            <person name="Kewalramani A.R."/>
            <person name="Longmire J."/>
            <person name="Lucas S."/>
            <person name="Malfatti S."/>
            <person name="Martinez D."/>
            <person name="McMurry K."/>
            <person name="Meincke L.J."/>
            <person name="Misra M."/>
            <person name="Moseman B.L."/>
            <person name="Mundt M."/>
            <person name="Munk A.C."/>
            <person name="Okinaka R.T."/>
            <person name="Parson-Quintana B."/>
            <person name="Reilly L.P."/>
            <person name="Richardson P."/>
            <person name="Robinson D.L."/>
            <person name="Saunders E."/>
            <person name="Tapia R."/>
            <person name="Tesmer J.G."/>
            <person name="Thayer N."/>
            <person name="Thompson L.S."/>
            <person name="Tice H."/>
            <person name="Ticknor L.O."/>
            <person name="Wills P.L."/>
            <person name="Gilna P."/>
            <person name="Brettin T.S."/>
        </authorList>
    </citation>
    <scope>NUCLEOTIDE SEQUENCE [LARGE SCALE GENOMIC DNA]</scope>
    <source>
        <strain>Al Hakam</strain>
    </source>
</reference>
<name>NUSB_BACAH</name>
<organism>
    <name type="scientific">Bacillus thuringiensis (strain Al Hakam)</name>
    <dbReference type="NCBI Taxonomy" id="412694"/>
    <lineage>
        <taxon>Bacteria</taxon>
        <taxon>Bacillati</taxon>
        <taxon>Bacillota</taxon>
        <taxon>Bacilli</taxon>
        <taxon>Bacillales</taxon>
        <taxon>Bacillaceae</taxon>
        <taxon>Bacillus</taxon>
        <taxon>Bacillus cereus group</taxon>
    </lineage>
</organism>
<proteinExistence type="inferred from homology"/>
<feature type="chain" id="PRO_1000023708" description="Transcription antitermination protein NusB">
    <location>
        <begin position="1"/>
        <end position="130"/>
    </location>
</feature>
<dbReference type="EMBL" id="CP000485">
    <property type="protein sequence ID" value="ABK87017.1"/>
    <property type="molecule type" value="Genomic_DNA"/>
</dbReference>
<dbReference type="RefSeq" id="WP_000830249.1">
    <property type="nucleotide sequence ID" value="NC_008600.1"/>
</dbReference>
<dbReference type="SMR" id="A0RIH4"/>
<dbReference type="GeneID" id="93006920"/>
<dbReference type="KEGG" id="btl:BALH_3790"/>
<dbReference type="HOGENOM" id="CLU_087843_3_3_9"/>
<dbReference type="GO" id="GO:0005829">
    <property type="term" value="C:cytosol"/>
    <property type="evidence" value="ECO:0007669"/>
    <property type="project" value="TreeGrafter"/>
</dbReference>
<dbReference type="GO" id="GO:0003723">
    <property type="term" value="F:RNA binding"/>
    <property type="evidence" value="ECO:0007669"/>
    <property type="project" value="UniProtKB-UniRule"/>
</dbReference>
<dbReference type="GO" id="GO:0006353">
    <property type="term" value="P:DNA-templated transcription termination"/>
    <property type="evidence" value="ECO:0007669"/>
    <property type="project" value="UniProtKB-UniRule"/>
</dbReference>
<dbReference type="GO" id="GO:0031564">
    <property type="term" value="P:transcription antitermination"/>
    <property type="evidence" value="ECO:0007669"/>
    <property type="project" value="UniProtKB-KW"/>
</dbReference>
<dbReference type="CDD" id="cd00619">
    <property type="entry name" value="Terminator_NusB"/>
    <property type="match status" value="1"/>
</dbReference>
<dbReference type="FunFam" id="1.10.940.10:FF:000003">
    <property type="entry name" value="Transcription antitermination factor NusB"/>
    <property type="match status" value="1"/>
</dbReference>
<dbReference type="Gene3D" id="1.10.940.10">
    <property type="entry name" value="NusB-like"/>
    <property type="match status" value="1"/>
</dbReference>
<dbReference type="HAMAP" id="MF_00073">
    <property type="entry name" value="NusB"/>
    <property type="match status" value="1"/>
</dbReference>
<dbReference type="InterPro" id="IPR035926">
    <property type="entry name" value="NusB-like_sf"/>
</dbReference>
<dbReference type="InterPro" id="IPR011605">
    <property type="entry name" value="NusB_fam"/>
</dbReference>
<dbReference type="InterPro" id="IPR006027">
    <property type="entry name" value="NusB_RsmB_TIM44"/>
</dbReference>
<dbReference type="NCBIfam" id="TIGR01951">
    <property type="entry name" value="nusB"/>
    <property type="match status" value="1"/>
</dbReference>
<dbReference type="NCBIfam" id="NF001223">
    <property type="entry name" value="PRK00202.1-1"/>
    <property type="match status" value="1"/>
</dbReference>
<dbReference type="PANTHER" id="PTHR11078:SF3">
    <property type="entry name" value="ANTITERMINATION NUSB DOMAIN-CONTAINING PROTEIN"/>
    <property type="match status" value="1"/>
</dbReference>
<dbReference type="PANTHER" id="PTHR11078">
    <property type="entry name" value="N UTILIZATION SUBSTANCE PROTEIN B-RELATED"/>
    <property type="match status" value="1"/>
</dbReference>
<dbReference type="Pfam" id="PF01029">
    <property type="entry name" value="NusB"/>
    <property type="match status" value="1"/>
</dbReference>
<dbReference type="SUPFAM" id="SSF48013">
    <property type="entry name" value="NusB-like"/>
    <property type="match status" value="1"/>
</dbReference>
<accession>A0RIH4</accession>
<protein>
    <recommendedName>
        <fullName evidence="1">Transcription antitermination protein NusB</fullName>
    </recommendedName>
    <alternativeName>
        <fullName evidence="1">Antitermination factor NusB</fullName>
    </alternativeName>
</protein>
<evidence type="ECO:0000255" key="1">
    <source>
        <dbReference type="HAMAP-Rule" id="MF_00073"/>
    </source>
</evidence>
<comment type="function">
    <text evidence="1">Involved in transcription antitermination. Required for transcription of ribosomal RNA (rRNA) genes. Binds specifically to the boxA antiterminator sequence of the ribosomal RNA (rrn) operons.</text>
</comment>
<comment type="similarity">
    <text evidence="1">Belongs to the NusB family.</text>
</comment>